<keyword id="KW-0903">Direct protein sequencing</keyword>
<keyword id="KW-0225">Disease variant</keyword>
<keyword id="KW-1015">Disulfide bond</keyword>
<keyword id="KW-0325">Glycoprotein</keyword>
<keyword id="KW-1063">Hypotrichosis</keyword>
<keyword id="KW-0991">Intellectual disability</keyword>
<keyword id="KW-0495">Mineral balance</keyword>
<keyword id="KW-0597">Phosphoprotein</keyword>
<keyword id="KW-1267">Proteomics identification</keyword>
<keyword id="KW-1185">Reference proteome</keyword>
<keyword id="KW-0677">Repeat</keyword>
<keyword id="KW-0964">Secreted</keyword>
<keyword id="KW-0732">Signal</keyword>
<protein>
    <recommendedName>
        <fullName>Alpha-2-HS-glycoprotein</fullName>
    </recommendedName>
    <alternativeName>
        <fullName>Alpha-2-Z-globulin</fullName>
    </alternativeName>
    <alternativeName>
        <fullName>Ba-alpha-2-glycoprotein</fullName>
    </alternativeName>
    <alternativeName>
        <fullName>Fetuin-A</fullName>
    </alternativeName>
    <component>
        <recommendedName>
            <fullName>Alpha-2-HS-glycoprotein chain A</fullName>
        </recommendedName>
    </component>
    <component>
        <recommendedName>
            <fullName>Alpha-2-HS-glycoprotein chain B</fullName>
        </recommendedName>
    </component>
</protein>
<dbReference type="EMBL" id="M16961">
    <property type="protein sequence ID" value="AAA51683.1"/>
    <property type="molecule type" value="mRNA"/>
</dbReference>
<dbReference type="EMBL" id="D67013">
    <property type="protein sequence ID" value="BAA22652.1"/>
    <property type="molecule type" value="Genomic_DNA"/>
</dbReference>
<dbReference type="EMBL" id="AB038689">
    <property type="protein sequence ID" value="BAA92189.1"/>
    <property type="molecule type" value="Genomic_DNA"/>
</dbReference>
<dbReference type="EMBL" id="AK292751">
    <property type="protein sequence ID" value="BAF85440.1"/>
    <property type="molecule type" value="mRNA"/>
</dbReference>
<dbReference type="EMBL" id="AK312969">
    <property type="protein sequence ID" value="BAG35808.1"/>
    <property type="molecule type" value="mRNA"/>
</dbReference>
<dbReference type="EMBL" id="AC068631">
    <property type="status" value="NOT_ANNOTATED_CDS"/>
    <property type="molecule type" value="Genomic_DNA"/>
</dbReference>
<dbReference type="EMBL" id="CH471052">
    <property type="protein sequence ID" value="EAW78189.1"/>
    <property type="molecule type" value="Genomic_DNA"/>
</dbReference>
<dbReference type="EMBL" id="BC048198">
    <property type="protein sequence ID" value="AAH48198.1"/>
    <property type="molecule type" value="mRNA"/>
</dbReference>
<dbReference type="EMBL" id="BC052590">
    <property type="protein sequence ID" value="AAH52590.1"/>
    <property type="molecule type" value="mRNA"/>
</dbReference>
<dbReference type="EMBL" id="D67012">
    <property type="protein sequence ID" value="BAA22651.1"/>
    <property type="molecule type" value="mRNA"/>
</dbReference>
<dbReference type="EMBL" id="AF119895">
    <property type="protein sequence ID" value="AAF69649.1"/>
    <property type="molecule type" value="mRNA"/>
</dbReference>
<dbReference type="CCDS" id="CCDS3278.1"/>
<dbReference type="PIR" id="A29081">
    <property type="entry name" value="WOHU"/>
</dbReference>
<dbReference type="RefSeq" id="NP_001613.2">
    <property type="nucleotide sequence ID" value="NM_001622.4"/>
</dbReference>
<dbReference type="SMR" id="P02765"/>
<dbReference type="BioGRID" id="106700">
    <property type="interactions" value="111"/>
</dbReference>
<dbReference type="CORUM" id="P02765"/>
<dbReference type="FunCoup" id="P02765">
    <property type="interactions" value="810"/>
</dbReference>
<dbReference type="IntAct" id="P02765">
    <property type="interactions" value="57"/>
</dbReference>
<dbReference type="MINT" id="P02765"/>
<dbReference type="STRING" id="9606.ENSP00000273784"/>
<dbReference type="ChEMBL" id="CHEMBL4295694"/>
<dbReference type="DrugBank" id="DB09130">
    <property type="generic name" value="Copper"/>
</dbReference>
<dbReference type="DrugBank" id="DB01593">
    <property type="generic name" value="Zinc"/>
</dbReference>
<dbReference type="DrugBank" id="DB14487">
    <property type="generic name" value="Zinc acetate"/>
</dbReference>
<dbReference type="DrugBank" id="DB14533">
    <property type="generic name" value="Zinc chloride"/>
</dbReference>
<dbReference type="DrugBank" id="DB14548">
    <property type="generic name" value="Zinc sulfate, unspecified form"/>
</dbReference>
<dbReference type="MEROPS" id="I25.020"/>
<dbReference type="MEROPS" id="I25.021"/>
<dbReference type="CarbonylDB" id="P02765"/>
<dbReference type="GlyConnect" id="23">
    <property type="glycosylation" value="59 N-Linked glycans (2 sites), 4 O-Linked glycans (2 sites)"/>
</dbReference>
<dbReference type="GlyCosmos" id="P02765">
    <property type="glycosylation" value="14 sites, 80 glycans"/>
</dbReference>
<dbReference type="GlyGen" id="P02765">
    <property type="glycosylation" value="17 sites, 166 N-linked glycans (2 sites), 15 O-linked glycans (12 sites)"/>
</dbReference>
<dbReference type="iPTMnet" id="P02765"/>
<dbReference type="PhosphoSitePlus" id="P02765"/>
<dbReference type="SwissPalm" id="P02765"/>
<dbReference type="BioMuta" id="AHSG"/>
<dbReference type="DMDM" id="112910"/>
<dbReference type="CPTAC" id="non-CPTAC-1066"/>
<dbReference type="CPTAC" id="non-CPTAC-1067"/>
<dbReference type="jPOST" id="P02765"/>
<dbReference type="MassIVE" id="P02765"/>
<dbReference type="PaxDb" id="9606-ENSP00000393887"/>
<dbReference type="PeptideAtlas" id="P02765"/>
<dbReference type="PRIDE" id="P02765"/>
<dbReference type="ProteomicsDB" id="51585"/>
<dbReference type="TopDownProteomics" id="P02765"/>
<dbReference type="Antibodypedia" id="870">
    <property type="antibodies" value="664 antibodies from 40 providers"/>
</dbReference>
<dbReference type="DNASU" id="197"/>
<dbReference type="Ensembl" id="ENST00000411641.7">
    <property type="protein sequence ID" value="ENSP00000393887.2"/>
    <property type="gene ID" value="ENSG00000145192.13"/>
</dbReference>
<dbReference type="GeneID" id="197"/>
<dbReference type="KEGG" id="hsa:197"/>
<dbReference type="MANE-Select" id="ENST00000411641.7">
    <property type="protein sequence ID" value="ENSP00000393887.2"/>
    <property type="RefSeq nucleotide sequence ID" value="NM_001622.4"/>
    <property type="RefSeq protein sequence ID" value="NP_001613.2"/>
</dbReference>
<dbReference type="UCSC" id="uc003fqk.5">
    <property type="organism name" value="human"/>
</dbReference>
<dbReference type="AGR" id="HGNC:349"/>
<dbReference type="CTD" id="197"/>
<dbReference type="DisGeNET" id="197"/>
<dbReference type="GeneCards" id="AHSG"/>
<dbReference type="HGNC" id="HGNC:349">
    <property type="gene designation" value="AHSG"/>
</dbReference>
<dbReference type="HPA" id="ENSG00000145192">
    <property type="expression patterns" value="Tissue enriched (liver)"/>
</dbReference>
<dbReference type="MalaCards" id="AHSG"/>
<dbReference type="MIM" id="138680">
    <property type="type" value="gene"/>
</dbReference>
<dbReference type="MIM" id="203650">
    <property type="type" value="phenotype"/>
</dbReference>
<dbReference type="neXtProt" id="NX_P02765"/>
<dbReference type="OpenTargets" id="ENSG00000145192"/>
<dbReference type="Orphanet" id="2850">
    <property type="disease" value="Alopecia-intellectual disability syndrome"/>
</dbReference>
<dbReference type="PharmGKB" id="PA24642"/>
<dbReference type="VEuPathDB" id="HostDB:ENSG00000145192"/>
<dbReference type="eggNOG" id="ENOG502RYRI">
    <property type="taxonomic scope" value="Eukaryota"/>
</dbReference>
<dbReference type="GeneTree" id="ENSGT00950000182930"/>
<dbReference type="HOGENOM" id="CLU_052519_0_0_1"/>
<dbReference type="InParanoid" id="P02765"/>
<dbReference type="OrthoDB" id="8780871at2759"/>
<dbReference type="PAN-GO" id="P02765">
    <property type="GO annotations" value="4 GO annotations based on evolutionary models"/>
</dbReference>
<dbReference type="PhylomeDB" id="P02765"/>
<dbReference type="TreeFam" id="TF333729"/>
<dbReference type="PathwayCommons" id="P02765"/>
<dbReference type="Reactome" id="R-HSA-114608">
    <property type="pathway name" value="Platelet degranulation"/>
</dbReference>
<dbReference type="Reactome" id="R-HSA-381426">
    <property type="pathway name" value="Regulation of Insulin-like Growth Factor (IGF) transport and uptake by Insulin-like Growth Factor Binding Proteins (IGFBPs)"/>
</dbReference>
<dbReference type="Reactome" id="R-HSA-6798695">
    <property type="pathway name" value="Neutrophil degranulation"/>
</dbReference>
<dbReference type="Reactome" id="R-HSA-8957275">
    <property type="pathway name" value="Post-translational protein phosphorylation"/>
</dbReference>
<dbReference type="SignaLink" id="P02765"/>
<dbReference type="SIGNOR" id="P02765"/>
<dbReference type="BioGRID-ORCS" id="197">
    <property type="hits" value="12 hits in 1148 CRISPR screens"/>
</dbReference>
<dbReference type="ChiTaRS" id="AHSG">
    <property type="organism name" value="human"/>
</dbReference>
<dbReference type="GeneWiki" id="Alpha-2-HS-glycoprotein"/>
<dbReference type="GenomeRNAi" id="197"/>
<dbReference type="Pharos" id="P02765">
    <property type="development level" value="Tbio"/>
</dbReference>
<dbReference type="PRO" id="PR:P02765"/>
<dbReference type="Proteomes" id="UP000005640">
    <property type="component" value="Chromosome 3"/>
</dbReference>
<dbReference type="RNAct" id="P02765">
    <property type="molecule type" value="protein"/>
</dbReference>
<dbReference type="Bgee" id="ENSG00000145192">
    <property type="expression patterns" value="Expressed in liver and 114 other cell types or tissues"/>
</dbReference>
<dbReference type="ExpressionAtlas" id="P02765">
    <property type="expression patterns" value="baseline and differential"/>
</dbReference>
<dbReference type="GO" id="GO:0072562">
    <property type="term" value="C:blood microparticle"/>
    <property type="evidence" value="ECO:0007005"/>
    <property type="project" value="UniProtKB"/>
</dbReference>
<dbReference type="GO" id="GO:0062023">
    <property type="term" value="C:collagen-containing extracellular matrix"/>
    <property type="evidence" value="ECO:0007005"/>
    <property type="project" value="BHF-UCL"/>
</dbReference>
<dbReference type="GO" id="GO:0005788">
    <property type="term" value="C:endoplasmic reticulum lumen"/>
    <property type="evidence" value="ECO:0000304"/>
    <property type="project" value="Reactome"/>
</dbReference>
<dbReference type="GO" id="GO:0070062">
    <property type="term" value="C:extracellular exosome"/>
    <property type="evidence" value="ECO:0007005"/>
    <property type="project" value="UniProtKB"/>
</dbReference>
<dbReference type="GO" id="GO:0031012">
    <property type="term" value="C:extracellular matrix"/>
    <property type="evidence" value="ECO:0000318"/>
    <property type="project" value="GO_Central"/>
</dbReference>
<dbReference type="GO" id="GO:0005576">
    <property type="term" value="C:extracellular region"/>
    <property type="evidence" value="ECO:0007005"/>
    <property type="project" value="BHF-UCL"/>
</dbReference>
<dbReference type="GO" id="GO:0005615">
    <property type="term" value="C:extracellular space"/>
    <property type="evidence" value="ECO:0007005"/>
    <property type="project" value="UniProtKB"/>
</dbReference>
<dbReference type="GO" id="GO:0005794">
    <property type="term" value="C:Golgi apparatus"/>
    <property type="evidence" value="ECO:0000314"/>
    <property type="project" value="HPA"/>
</dbReference>
<dbReference type="GO" id="GO:0031093">
    <property type="term" value="C:platelet alpha granule lumen"/>
    <property type="evidence" value="ECO:0000304"/>
    <property type="project" value="Reactome"/>
</dbReference>
<dbReference type="GO" id="GO:0034774">
    <property type="term" value="C:secretory granule lumen"/>
    <property type="evidence" value="ECO:0000304"/>
    <property type="project" value="Reactome"/>
</dbReference>
<dbReference type="GO" id="GO:0004869">
    <property type="term" value="F:cysteine-type endopeptidase inhibitor activity"/>
    <property type="evidence" value="ECO:0007669"/>
    <property type="project" value="InterPro"/>
</dbReference>
<dbReference type="GO" id="GO:0004866">
    <property type="term" value="F:endopeptidase inhibitor activity"/>
    <property type="evidence" value="ECO:0000318"/>
    <property type="project" value="GO_Central"/>
</dbReference>
<dbReference type="GO" id="GO:0019210">
    <property type="term" value="F:kinase inhibitor activity"/>
    <property type="evidence" value="ECO:0000303"/>
    <property type="project" value="UniProtKB"/>
</dbReference>
<dbReference type="GO" id="GO:0006953">
    <property type="term" value="P:acute-phase response"/>
    <property type="evidence" value="ECO:0000314"/>
    <property type="project" value="UniProtKB"/>
</dbReference>
<dbReference type="GO" id="GO:0030502">
    <property type="term" value="P:negative regulation of bone mineralization"/>
    <property type="evidence" value="ECO:0000250"/>
    <property type="project" value="UniProtKB"/>
</dbReference>
<dbReference type="GO" id="GO:0046627">
    <property type="term" value="P:negative regulation of insulin receptor signaling pathway"/>
    <property type="evidence" value="ECO:0000303"/>
    <property type="project" value="UniProtKB"/>
</dbReference>
<dbReference type="GO" id="GO:0001503">
    <property type="term" value="P:ossification"/>
    <property type="evidence" value="ECO:0007669"/>
    <property type="project" value="Ensembl"/>
</dbReference>
<dbReference type="GO" id="GO:0006907">
    <property type="term" value="P:pinocytosis"/>
    <property type="evidence" value="ECO:0000303"/>
    <property type="project" value="UniProtKB"/>
</dbReference>
<dbReference type="GO" id="GO:0050766">
    <property type="term" value="P:positive regulation of phagocytosis"/>
    <property type="evidence" value="ECO:0000314"/>
    <property type="project" value="UniProtKB"/>
</dbReference>
<dbReference type="GO" id="GO:0030500">
    <property type="term" value="P:regulation of bone mineralization"/>
    <property type="evidence" value="ECO:0000303"/>
    <property type="project" value="UniProtKB"/>
</dbReference>
<dbReference type="GO" id="GO:0050727">
    <property type="term" value="P:regulation of inflammatory response"/>
    <property type="evidence" value="ECO:0000315"/>
    <property type="project" value="UniProtKB"/>
</dbReference>
<dbReference type="GO" id="GO:0001501">
    <property type="term" value="P:skeletal system development"/>
    <property type="evidence" value="ECO:0000303"/>
    <property type="project" value="UniProtKB"/>
</dbReference>
<dbReference type="CDD" id="cd00042">
    <property type="entry name" value="CY"/>
    <property type="match status" value="2"/>
</dbReference>
<dbReference type="FunFam" id="3.10.450.10:FF:000010">
    <property type="entry name" value="Alpha-2-HS-glycoprotein"/>
    <property type="match status" value="1"/>
</dbReference>
<dbReference type="FunFam" id="3.10.450.10:FF:000009">
    <property type="entry name" value="Alpha-2-HS-glycoprotein 2"/>
    <property type="match status" value="1"/>
</dbReference>
<dbReference type="Gene3D" id="3.10.450.10">
    <property type="match status" value="2"/>
</dbReference>
<dbReference type="InterPro" id="IPR000010">
    <property type="entry name" value="Cystatin_dom"/>
</dbReference>
<dbReference type="InterPro" id="IPR025760">
    <property type="entry name" value="Cystatin_Fetuin_A"/>
</dbReference>
<dbReference type="InterPro" id="IPR046350">
    <property type="entry name" value="Cystatin_sf"/>
</dbReference>
<dbReference type="InterPro" id="IPR050735">
    <property type="entry name" value="Kininogen_Fetuin_HRG"/>
</dbReference>
<dbReference type="InterPro" id="IPR001363">
    <property type="entry name" value="Prot_inh_fetuin_CS"/>
</dbReference>
<dbReference type="PANTHER" id="PTHR13814:SF6">
    <property type="entry name" value="ALPHA-2-HS-GLYCOPROTEIN"/>
    <property type="match status" value="1"/>
</dbReference>
<dbReference type="PANTHER" id="PTHR13814">
    <property type="entry name" value="FETUIN"/>
    <property type="match status" value="1"/>
</dbReference>
<dbReference type="Pfam" id="PF00031">
    <property type="entry name" value="Cystatin"/>
    <property type="match status" value="1"/>
</dbReference>
<dbReference type="SMART" id="SM00043">
    <property type="entry name" value="CY"/>
    <property type="match status" value="2"/>
</dbReference>
<dbReference type="SUPFAM" id="SSF54403">
    <property type="entry name" value="Cystatin/monellin"/>
    <property type="match status" value="2"/>
</dbReference>
<dbReference type="PROSITE" id="PS51529">
    <property type="entry name" value="CYSTATIN_FETUIN_A"/>
    <property type="match status" value="2"/>
</dbReference>
<dbReference type="PROSITE" id="PS01254">
    <property type="entry name" value="FETUIN_1"/>
    <property type="match status" value="1"/>
</dbReference>
<dbReference type="PROSITE" id="PS01255">
    <property type="entry name" value="FETUIN_2"/>
    <property type="match status" value="1"/>
</dbReference>
<organism>
    <name type="scientific">Homo sapiens</name>
    <name type="common">Human</name>
    <dbReference type="NCBI Taxonomy" id="9606"/>
    <lineage>
        <taxon>Eukaryota</taxon>
        <taxon>Metazoa</taxon>
        <taxon>Chordata</taxon>
        <taxon>Craniata</taxon>
        <taxon>Vertebrata</taxon>
        <taxon>Euteleostomi</taxon>
        <taxon>Mammalia</taxon>
        <taxon>Eutheria</taxon>
        <taxon>Euarchontoglires</taxon>
        <taxon>Primates</taxon>
        <taxon>Haplorrhini</taxon>
        <taxon>Catarrhini</taxon>
        <taxon>Hominidae</taxon>
        <taxon>Homo</taxon>
    </lineage>
</organism>
<sequence>MKSLVLLLCLAQLWGCHSAPHGPGLIYRQPNCDDPETEEAALVAIDYINQNLPWGYKHTLNQIDEVKVWPQQPSGELFEIEIDTLETTCHVLDPTPVARCSVRQLKEHAVEGDCDFQLLKLDGKFSVVYAKCDSSPDSAEDVRKVCQDCPLLAPLNDTRVVHAAKAALAAFNAQNNGSNFQLEEISRAQLVPLPPSTYVEFTVSGTDCVAKEATEAAKCNLLAEKQYGFCKATLSEKLGGAEVAVTCMVFQTQPVSSQPQPEGANEAVPTPVVDPDAPPSPPLGAPGLPPAGSPPDSHVLLAAPPGHQLHRAHYDLRHTFMGVVSLGSPSGEVSHPRKTRTVVQPSVGAAAGPVVPPCPGRIRHFKV</sequence>
<comment type="function">
    <text>Promotes endocytosis, possesses opsonic properties and influences the mineral phase of bone. Shows affinity for calcium and barium ions.</text>
</comment>
<comment type="subunit">
    <text>Alpha-2-HS glycoprotein derives from this precursor, when the connecting peptide is cleaved off. The two chains A and B are held together by a single disulfide bond.</text>
</comment>
<comment type="interaction">
    <interactant intactId="EBI-1223374">
        <id>P02765</id>
    </interactant>
    <interactant intactId="EBI-6150673">
        <id>A5A3E0</id>
        <label>POTEF</label>
    </interactant>
    <organismsDiffer>false</organismsDiffer>
    <experiments>2</experiments>
</comment>
<comment type="subcellular location">
    <subcellularLocation>
        <location>Secreted</location>
    </subcellularLocation>
</comment>
<comment type="tissue specificity">
    <text>Synthesized in liver and selectively concentrated in bone matrix. Secreted in plasma. It is also found in dentin in much higher quantities than other plasma proteins.</text>
</comment>
<comment type="PTM">
    <text evidence="6 17">Phosphorylated by FAM20C in the extracellular medium.</text>
</comment>
<comment type="PTM">
    <text evidence="8 10 11 12 13 14 15 16">O- and N-glycosylated. O-glycosylated with core 1 or possibly core 8 glycans. N-glycan at Asn-156: Hex5HexNAc4; N-glycan heterogeneity at Asn-176: Hex5HexNAc4 (major) and Hex6HexNAc5 (minor).</text>
</comment>
<comment type="polymorphism">
    <text evidence="22">There are two common alleles, AHSG*1 and AHSG*2. AHSG*1 has Thr-248/Thr-256; AHSG*2 has Met-248/Ser-256.</text>
</comment>
<comment type="disease" evidence="19">
    <disease id="DI-05180">
        <name>Alopecia-intellectual disability syndrome 1</name>
        <acronym>APMR1</acronym>
        <description>A rare autosomal recessive form of alopecia. APMR1 patients show loss of hair on the scalp, absence of eyebrows, eyelashes, axillary and pubic hair, and mild to severe intellectual disability.</description>
        <dbReference type="MIM" id="203650"/>
    </disease>
    <text>The disease may be caused by variants affecting the gene represented in this entry.</text>
</comment>
<comment type="similarity">
    <text evidence="3">Belongs to the fetuin family.</text>
</comment>
<accession>P02765</accession>
<accession>A8K9N6</accession>
<accession>B2R7G1</accession>
<accession>O14961</accession>
<accession>O14962</accession>
<accession>Q9P152</accession>
<proteinExistence type="evidence at protein level"/>
<name>FETUA_HUMAN</name>
<feature type="signal peptide" evidence="7 20">
    <location>
        <begin position="1"/>
        <end position="18"/>
    </location>
</feature>
<feature type="chain" id="PRO_0000008887" description="Alpha-2-HS-glycoprotein chain A" evidence="20">
    <location>
        <begin position="19"/>
        <end position="300"/>
    </location>
</feature>
<feature type="propeptide" id="PRO_0000008888" description="Connecting peptide" evidence="21">
    <location>
        <begin position="301"/>
        <end position="340"/>
    </location>
</feature>
<feature type="chain" id="PRO_0000008889" description="Alpha-2-HS-glycoprotein chain B">
    <location>
        <begin position="341"/>
        <end position="367"/>
    </location>
</feature>
<feature type="domain" description="Cystatin fetuin-A-type 1" evidence="3">
    <location>
        <begin position="27"/>
        <end position="133"/>
    </location>
</feature>
<feature type="domain" description="Cystatin fetuin-A-type 2" evidence="3">
    <location>
        <begin position="144"/>
        <end position="255"/>
    </location>
</feature>
<feature type="region of interest" description="Disordered" evidence="4">
    <location>
        <begin position="255"/>
        <end position="298"/>
    </location>
</feature>
<feature type="compositionally biased region" description="Pro residues" evidence="4">
    <location>
        <begin position="276"/>
        <end position="293"/>
    </location>
</feature>
<feature type="modified residue" description="Phosphoserine" evidence="28">
    <location>
        <position position="134"/>
    </location>
</feature>
<feature type="modified residue" description="Phosphoserine; by FAM20C" evidence="17">
    <location>
        <position position="135"/>
    </location>
</feature>
<feature type="modified residue" description="Phosphoserine; by FAM20C" evidence="6 17 24 25 26 27 28">
    <location>
        <position position="138"/>
    </location>
</feature>
<feature type="modified residue" description="Phosphothreonine; by FAM20C" evidence="17 28">
    <location>
        <position position="319"/>
    </location>
</feature>
<feature type="modified residue" description="Phosphoserine; by FAM20C" evidence="17">
    <location>
        <position position="325"/>
    </location>
</feature>
<feature type="modified residue" description="Phosphoserine; by FAM20C" evidence="17">
    <location>
        <position position="328"/>
    </location>
</feature>
<feature type="modified residue" description="Phosphoserine; by FAM20C" evidence="6 17 28">
    <location>
        <position position="330"/>
    </location>
</feature>
<feature type="glycosylation site" id="CAR_000064" description="N-linked (GlcNAc...) (complex) asparagine" evidence="10 11 12 13 14 15 16">
    <location>
        <position position="156"/>
    </location>
</feature>
<feature type="glycosylation site" id="CAR_000065" description="N-linked (GlcNAc...) (complex) asparagine" evidence="8 11 12 15 16">
    <location>
        <position position="176"/>
    </location>
</feature>
<feature type="glycosylation site" id="CAR_000067" description="O-linked (GalNAc...) threonine" evidence="2">
    <location>
        <position position="270"/>
    </location>
</feature>
<feature type="glycosylation site" description="O-linked (GalNAc...) serine" evidence="2">
    <location>
        <position position="280"/>
    </location>
</feature>
<feature type="glycosylation site" description="O-linked (GalNAc...) serine" evidence="2">
    <location>
        <position position="293"/>
    </location>
</feature>
<feature type="glycosylation site" description="O-linked (GalNAc...) threonine" evidence="1">
    <location>
        <position position="339"/>
    </location>
</feature>
<feature type="glycosylation site" description="O-linked (GalNAc...) threonine" evidence="2">
    <location>
        <position position="341"/>
    </location>
</feature>
<feature type="glycosylation site" id="CAR_000068" description="O-linked (GalNAc...) serine" evidence="16">
    <location>
        <position position="346"/>
    </location>
</feature>
<feature type="disulfide bond" description="Interchain (between A and B chains)">
    <location>
        <begin position="32"/>
        <end position="358"/>
    </location>
</feature>
<feature type="disulfide bond" evidence="3 18">
    <location>
        <begin position="89"/>
        <end position="100"/>
    </location>
</feature>
<feature type="disulfide bond" evidence="3 18">
    <location>
        <begin position="114"/>
        <end position="132"/>
    </location>
</feature>
<feature type="disulfide bond" evidence="3 18">
    <location>
        <begin position="146"/>
        <end position="149"/>
    </location>
</feature>
<feature type="disulfide bond" evidence="3 18">
    <location>
        <begin position="208"/>
        <end position="219"/>
    </location>
</feature>
<feature type="disulfide bond" evidence="3 18">
    <location>
        <begin position="230"/>
        <end position="247"/>
    </location>
</feature>
<feature type="sequence variant" id="VAR_055802" description="In dbSNP:rs7633550.">
    <original>V</original>
    <variation>L</variation>
    <location>
        <position position="142"/>
    </location>
</feature>
<feature type="sequence variant" id="VAR_002388" description="In allele AHSG*1; dbSNP:rs4917." evidence="22">
    <original>M</original>
    <variation>T</variation>
    <location>
        <position position="248"/>
    </location>
</feature>
<feature type="sequence variant" id="VAR_002389" description="In allele AHSG*1; dbSNP:rs4918." evidence="9 22">
    <original>S</original>
    <variation>T</variation>
    <location>
        <position position="256"/>
    </location>
</feature>
<feature type="sequence variant" id="VAR_012474" description="In allele AHSG*5; dbSNP:rs70961709." evidence="5">
    <original>D</original>
    <variation>N</variation>
    <location>
        <position position="276"/>
    </location>
</feature>
<feature type="sequence variant" id="VAR_012475" description="In allele AHSG*3; dbSNP:rs35457250." evidence="5">
    <original>R</original>
    <variation>C</variation>
    <location>
        <position position="317"/>
    </location>
</feature>
<feature type="sequence variant" id="VAR_080645" description="In APMR1; uncertain significance; dbSNP:rs201849460." evidence="19">
    <original>R</original>
    <variation>H</variation>
    <location>
        <position position="317"/>
    </location>
</feature>
<feature type="sequence conflict" description="In Ref. 2; BAA22652." evidence="23" ref="2">
    <original>C</original>
    <variation>W</variation>
    <location>
        <position position="16"/>
    </location>
</feature>
<feature type="sequence conflict" description="In Ref. 8; AA sequence." evidence="23" ref="8">
    <original>W</original>
    <variation>K</variation>
    <location>
        <position position="54"/>
    </location>
</feature>
<feature type="sequence conflict" description="In Ref. 10; BAA22651." evidence="23" ref="10">
    <original>F</original>
    <variation>S</variation>
    <location>
        <position position="125"/>
    </location>
</feature>
<feature type="sequence conflict" description="In Ref. 12; AAF69649." evidence="23" ref="12">
    <original>PLLAPLNDTRVVHAAKAALAAFNAQNNGSNFQL</original>
    <variation>MVGWQEGANHKNGAGRSQKQEMAEKMVPEVASG</variation>
    <location>
        <begin position="150"/>
        <end position="182"/>
    </location>
</feature>
<feature type="sequence conflict" description="In Ref. 2; BAA22652." evidence="23" ref="2">
    <original>S</original>
    <variation>C</variation>
    <location>
        <position position="204"/>
    </location>
</feature>
<reference key="1">
    <citation type="journal article" date="1987" name="Proc. Natl. Acad. Sci. U.S.A.">
        <title>Human alpha 2-HS-glycoprotein: the A and B chains with a connecting sequence are encoded by a single mRNA transcript.</title>
        <authorList>
            <person name="Lee C.-C."/>
            <person name="Bowman B.H."/>
            <person name="Yang F."/>
        </authorList>
    </citation>
    <scope>NUCLEOTIDE SEQUENCE [MRNA]</scope>
    <scope>VARIANTS THR-248 AND THR-256</scope>
</reference>
<reference key="2">
    <citation type="journal article" date="1997" name="Gene">
        <title>Structure of the gene encoding human alpha 2-HS glycoprotein (AHSG).</title>
        <authorList>
            <person name="Osawa M."/>
            <person name="Umetsu K."/>
            <person name="Sato M."/>
            <person name="Ohki T."/>
            <person name="Yukawa N."/>
            <person name="Suzuki T."/>
            <person name="Takeichi S."/>
        </authorList>
    </citation>
    <scope>NUCLEOTIDE SEQUENCE [GENOMIC DNA / MRNA]</scope>
    <scope>VARIANTS THR-248 AND THR-256</scope>
</reference>
<reference key="3">
    <citation type="journal article" date="2001" name="Ann. Hum. Genet.">
        <title>Haplotype analysis of the human alpha2-HS glycoprotein (fetuin) gene.</title>
        <authorList>
            <person name="Osawa M."/>
            <person name="Yuasa I."/>
            <person name="Kitano T."/>
            <person name="Henke J."/>
            <person name="Kaneko M."/>
            <person name="Udono T."/>
            <person name="Saitou N."/>
            <person name="Umetsu K."/>
        </authorList>
    </citation>
    <scope>NUCLEOTIDE SEQUENCE [GENOMIC DNA]</scope>
    <scope>VARIANTS THR-248; THR-256; ASN-276 AND CYS-317</scope>
</reference>
<reference key="4">
    <citation type="journal article" date="2004" name="Nat. Genet.">
        <title>Complete sequencing and characterization of 21,243 full-length human cDNAs.</title>
        <authorList>
            <person name="Ota T."/>
            <person name="Suzuki Y."/>
            <person name="Nishikawa T."/>
            <person name="Otsuki T."/>
            <person name="Sugiyama T."/>
            <person name="Irie R."/>
            <person name="Wakamatsu A."/>
            <person name="Hayashi K."/>
            <person name="Sato H."/>
            <person name="Nagai K."/>
            <person name="Kimura K."/>
            <person name="Makita H."/>
            <person name="Sekine M."/>
            <person name="Obayashi M."/>
            <person name="Nishi T."/>
            <person name="Shibahara T."/>
            <person name="Tanaka T."/>
            <person name="Ishii S."/>
            <person name="Yamamoto J."/>
            <person name="Saito K."/>
            <person name="Kawai Y."/>
            <person name="Isono Y."/>
            <person name="Nakamura Y."/>
            <person name="Nagahari K."/>
            <person name="Murakami K."/>
            <person name="Yasuda T."/>
            <person name="Iwayanagi T."/>
            <person name="Wagatsuma M."/>
            <person name="Shiratori A."/>
            <person name="Sudo H."/>
            <person name="Hosoiri T."/>
            <person name="Kaku Y."/>
            <person name="Kodaira H."/>
            <person name="Kondo H."/>
            <person name="Sugawara M."/>
            <person name="Takahashi M."/>
            <person name="Kanda K."/>
            <person name="Yokoi T."/>
            <person name="Furuya T."/>
            <person name="Kikkawa E."/>
            <person name="Omura Y."/>
            <person name="Abe K."/>
            <person name="Kamihara K."/>
            <person name="Katsuta N."/>
            <person name="Sato K."/>
            <person name="Tanikawa M."/>
            <person name="Yamazaki M."/>
            <person name="Ninomiya K."/>
            <person name="Ishibashi T."/>
            <person name="Yamashita H."/>
            <person name="Murakawa K."/>
            <person name="Fujimori K."/>
            <person name="Tanai H."/>
            <person name="Kimata M."/>
            <person name="Watanabe M."/>
            <person name="Hiraoka S."/>
            <person name="Chiba Y."/>
            <person name="Ishida S."/>
            <person name="Ono Y."/>
            <person name="Takiguchi S."/>
            <person name="Watanabe S."/>
            <person name="Yosida M."/>
            <person name="Hotuta T."/>
            <person name="Kusano J."/>
            <person name="Kanehori K."/>
            <person name="Takahashi-Fujii A."/>
            <person name="Hara H."/>
            <person name="Tanase T.-O."/>
            <person name="Nomura Y."/>
            <person name="Togiya S."/>
            <person name="Komai F."/>
            <person name="Hara R."/>
            <person name="Takeuchi K."/>
            <person name="Arita M."/>
            <person name="Imose N."/>
            <person name="Musashino K."/>
            <person name="Yuuki H."/>
            <person name="Oshima A."/>
            <person name="Sasaki N."/>
            <person name="Aotsuka S."/>
            <person name="Yoshikawa Y."/>
            <person name="Matsunawa H."/>
            <person name="Ichihara T."/>
            <person name="Shiohata N."/>
            <person name="Sano S."/>
            <person name="Moriya S."/>
            <person name="Momiyama H."/>
            <person name="Satoh N."/>
            <person name="Takami S."/>
            <person name="Terashima Y."/>
            <person name="Suzuki O."/>
            <person name="Nakagawa S."/>
            <person name="Senoh A."/>
            <person name="Mizoguchi H."/>
            <person name="Goto Y."/>
            <person name="Shimizu F."/>
            <person name="Wakebe H."/>
            <person name="Hishigaki H."/>
            <person name="Watanabe T."/>
            <person name="Sugiyama A."/>
            <person name="Takemoto M."/>
            <person name="Kawakami B."/>
            <person name="Yamazaki M."/>
            <person name="Watanabe K."/>
            <person name="Kumagai A."/>
            <person name="Itakura S."/>
            <person name="Fukuzumi Y."/>
            <person name="Fujimori Y."/>
            <person name="Komiyama M."/>
            <person name="Tashiro H."/>
            <person name="Tanigami A."/>
            <person name="Fujiwara T."/>
            <person name="Ono T."/>
            <person name="Yamada K."/>
            <person name="Fujii Y."/>
            <person name="Ozaki K."/>
            <person name="Hirao M."/>
            <person name="Ohmori Y."/>
            <person name="Kawabata A."/>
            <person name="Hikiji T."/>
            <person name="Kobatake N."/>
            <person name="Inagaki H."/>
            <person name="Ikema Y."/>
            <person name="Okamoto S."/>
            <person name="Okitani R."/>
            <person name="Kawakami T."/>
            <person name="Noguchi S."/>
            <person name="Itoh T."/>
            <person name="Shigeta K."/>
            <person name="Senba T."/>
            <person name="Matsumura K."/>
            <person name="Nakajima Y."/>
            <person name="Mizuno T."/>
            <person name="Morinaga M."/>
            <person name="Sasaki M."/>
            <person name="Togashi T."/>
            <person name="Oyama M."/>
            <person name="Hata H."/>
            <person name="Watanabe M."/>
            <person name="Komatsu T."/>
            <person name="Mizushima-Sugano J."/>
            <person name="Satoh T."/>
            <person name="Shirai Y."/>
            <person name="Takahashi Y."/>
            <person name="Nakagawa K."/>
            <person name="Okumura K."/>
            <person name="Nagase T."/>
            <person name="Nomura N."/>
            <person name="Kikuchi H."/>
            <person name="Masuho Y."/>
            <person name="Yamashita R."/>
            <person name="Nakai K."/>
            <person name="Yada T."/>
            <person name="Nakamura Y."/>
            <person name="Ohara O."/>
            <person name="Isogai T."/>
            <person name="Sugano S."/>
        </authorList>
    </citation>
    <scope>NUCLEOTIDE SEQUENCE [LARGE SCALE MRNA]</scope>
    <scope>VARIANTS THR-248 AND THR-256</scope>
    <source>
        <tissue>Liver</tissue>
        <tissue>Mammary gland</tissue>
    </source>
</reference>
<reference key="5">
    <citation type="journal article" date="2006" name="Nature">
        <title>The DNA sequence, annotation and analysis of human chromosome 3.</title>
        <authorList>
            <person name="Muzny D.M."/>
            <person name="Scherer S.E."/>
            <person name="Kaul R."/>
            <person name="Wang J."/>
            <person name="Yu J."/>
            <person name="Sudbrak R."/>
            <person name="Buhay C.J."/>
            <person name="Chen R."/>
            <person name="Cree A."/>
            <person name="Ding Y."/>
            <person name="Dugan-Rocha S."/>
            <person name="Gill R."/>
            <person name="Gunaratne P."/>
            <person name="Harris R.A."/>
            <person name="Hawes A.C."/>
            <person name="Hernandez J."/>
            <person name="Hodgson A.V."/>
            <person name="Hume J."/>
            <person name="Jackson A."/>
            <person name="Khan Z.M."/>
            <person name="Kovar-Smith C."/>
            <person name="Lewis L.R."/>
            <person name="Lozado R.J."/>
            <person name="Metzker M.L."/>
            <person name="Milosavljevic A."/>
            <person name="Miner G.R."/>
            <person name="Morgan M.B."/>
            <person name="Nazareth L.V."/>
            <person name="Scott G."/>
            <person name="Sodergren E."/>
            <person name="Song X.-Z."/>
            <person name="Steffen D."/>
            <person name="Wei S."/>
            <person name="Wheeler D.A."/>
            <person name="Wright M.W."/>
            <person name="Worley K.C."/>
            <person name="Yuan Y."/>
            <person name="Zhang Z."/>
            <person name="Adams C.Q."/>
            <person name="Ansari-Lari M.A."/>
            <person name="Ayele M."/>
            <person name="Brown M.J."/>
            <person name="Chen G."/>
            <person name="Chen Z."/>
            <person name="Clendenning J."/>
            <person name="Clerc-Blankenburg K.P."/>
            <person name="Chen R."/>
            <person name="Chen Z."/>
            <person name="Davis C."/>
            <person name="Delgado O."/>
            <person name="Dinh H.H."/>
            <person name="Dong W."/>
            <person name="Draper H."/>
            <person name="Ernst S."/>
            <person name="Fu G."/>
            <person name="Gonzalez-Garay M.L."/>
            <person name="Garcia D.K."/>
            <person name="Gillett W."/>
            <person name="Gu J."/>
            <person name="Hao B."/>
            <person name="Haugen E."/>
            <person name="Havlak P."/>
            <person name="He X."/>
            <person name="Hennig S."/>
            <person name="Hu S."/>
            <person name="Huang W."/>
            <person name="Jackson L.R."/>
            <person name="Jacob L.S."/>
            <person name="Kelly S.H."/>
            <person name="Kube M."/>
            <person name="Levy R."/>
            <person name="Li Z."/>
            <person name="Liu B."/>
            <person name="Liu J."/>
            <person name="Liu W."/>
            <person name="Lu J."/>
            <person name="Maheshwari M."/>
            <person name="Nguyen B.-V."/>
            <person name="Okwuonu G.O."/>
            <person name="Palmeiri A."/>
            <person name="Pasternak S."/>
            <person name="Perez L.M."/>
            <person name="Phelps K.A."/>
            <person name="Plopper F.J."/>
            <person name="Qiang B."/>
            <person name="Raymond C."/>
            <person name="Rodriguez R."/>
            <person name="Saenphimmachak C."/>
            <person name="Santibanez J."/>
            <person name="Shen H."/>
            <person name="Shen Y."/>
            <person name="Subramanian S."/>
            <person name="Tabor P.E."/>
            <person name="Verduzco D."/>
            <person name="Waldron L."/>
            <person name="Wang J."/>
            <person name="Wang J."/>
            <person name="Wang Q."/>
            <person name="Williams G.A."/>
            <person name="Wong G.K.-S."/>
            <person name="Yao Z."/>
            <person name="Zhang J."/>
            <person name="Zhang X."/>
            <person name="Zhao G."/>
            <person name="Zhou J."/>
            <person name="Zhou Y."/>
            <person name="Nelson D."/>
            <person name="Lehrach H."/>
            <person name="Reinhardt R."/>
            <person name="Naylor S.L."/>
            <person name="Yang H."/>
            <person name="Olson M."/>
            <person name="Weinstock G."/>
            <person name="Gibbs R.A."/>
        </authorList>
    </citation>
    <scope>NUCLEOTIDE SEQUENCE [LARGE SCALE GENOMIC DNA]</scope>
</reference>
<reference key="6">
    <citation type="submission" date="2005-09" db="EMBL/GenBank/DDBJ databases">
        <authorList>
            <person name="Mural R.J."/>
            <person name="Istrail S."/>
            <person name="Sutton G.G."/>
            <person name="Florea L."/>
            <person name="Halpern A.L."/>
            <person name="Mobarry C.M."/>
            <person name="Lippert R."/>
            <person name="Walenz B."/>
            <person name="Shatkay H."/>
            <person name="Dew I."/>
            <person name="Miller J.R."/>
            <person name="Flanigan M.J."/>
            <person name="Edwards N.J."/>
            <person name="Bolanos R."/>
            <person name="Fasulo D."/>
            <person name="Halldorsson B.V."/>
            <person name="Hannenhalli S."/>
            <person name="Turner R."/>
            <person name="Yooseph S."/>
            <person name="Lu F."/>
            <person name="Nusskern D.R."/>
            <person name="Shue B.C."/>
            <person name="Zheng X.H."/>
            <person name="Zhong F."/>
            <person name="Delcher A.L."/>
            <person name="Huson D.H."/>
            <person name="Kravitz S.A."/>
            <person name="Mouchard L."/>
            <person name="Reinert K."/>
            <person name="Remington K.A."/>
            <person name="Clark A.G."/>
            <person name="Waterman M.S."/>
            <person name="Eichler E.E."/>
            <person name="Adams M.D."/>
            <person name="Hunkapiller M.W."/>
            <person name="Myers E.W."/>
            <person name="Venter J.C."/>
        </authorList>
    </citation>
    <scope>NUCLEOTIDE SEQUENCE [LARGE SCALE GENOMIC DNA]</scope>
</reference>
<reference key="7">
    <citation type="journal article" date="2004" name="Genome Res.">
        <title>The status, quality, and expansion of the NIH full-length cDNA project: the Mammalian Gene Collection (MGC).</title>
        <authorList>
            <consortium name="The MGC Project Team"/>
        </authorList>
    </citation>
    <scope>NUCLEOTIDE SEQUENCE [LARGE SCALE MRNA]</scope>
    <scope>VARIANTS THR-248 AND THR-256</scope>
    <source>
        <tissue>Liver</tissue>
    </source>
</reference>
<reference key="8">
    <citation type="journal article" date="1986" name="J. Biol. Chem.">
        <title>The complete amino acid sequence of the A-chain of human plasma alpha 2HS-glycoprotein.</title>
        <authorList>
            <person name="Yoshioka Y."/>
            <person name="Gejyo F."/>
            <person name="Marti T."/>
            <person name="Rickli E.E."/>
            <person name="Burgi W."/>
            <person name="Offner G.D."/>
            <person name="Troxler R.F."/>
            <person name="Schmid K."/>
        </authorList>
    </citation>
    <scope>PROTEIN SEQUENCE OF 19-300</scope>
</reference>
<reference key="9">
    <citation type="journal article" date="2003" name="Nat. Biotechnol.">
        <title>Exploring proteomes and analyzing protein processing by mass spectrometric identification of sorted N-terminal peptides.</title>
        <authorList>
            <person name="Gevaert K."/>
            <person name="Goethals M."/>
            <person name="Martens L."/>
            <person name="Van Damme J."/>
            <person name="Staes A."/>
            <person name="Thomas G.R."/>
            <person name="Vandekerckhove J."/>
        </authorList>
    </citation>
    <scope>PROTEIN SEQUENCE OF 19-28</scope>
    <source>
        <tissue>Platelet</tissue>
    </source>
</reference>
<reference key="10">
    <citation type="journal article" date="1997" name="Hum. Genet.">
        <title>Molecular evidence for human alpha 2-HS glycoprotein (AHSG) polymorphism.</title>
        <authorList>
            <person name="Osawa M."/>
            <person name="Umetsu K."/>
            <person name="Ohki T."/>
            <person name="Nagasawa T."/>
            <person name="Suzuki T."/>
            <person name="Takeichi S."/>
        </authorList>
    </citation>
    <scope>NUCLEOTIDE SEQUENCE [MRNA] OF 34-367</scope>
    <scope>VARIANTS THR-248 AND THR-256</scope>
    <scope>POLYMORPHISM</scope>
    <source>
        <tissue>Liver</tissue>
    </source>
</reference>
<reference key="11">
    <citation type="submission" date="2007-03" db="UniProtKB">
        <authorList>
            <person name="Lubec G."/>
            <person name="Vishwanath V."/>
        </authorList>
    </citation>
    <scope>PROTEIN SEQUENCE OF 107-120</scope>
    <scope>IDENTIFICATION BY MASS SPECTROMETRY</scope>
    <source>
        <tissue>Brain</tissue>
        <tissue>Cajal-Retzius cell</tissue>
    </source>
</reference>
<reference key="12">
    <citation type="submission" date="1999-01" db="EMBL/GenBank/DDBJ databases">
        <title>Functional prediction of the coding sequences of 79 new genes deduced by analysis of cDNA clones from human fetal liver.</title>
        <authorList>
            <person name="Zhang C."/>
            <person name="Yu Y."/>
            <person name="Zhang S."/>
            <person name="Wei H."/>
            <person name="Zhang Y."/>
            <person name="Zhou G."/>
            <person name="Bi J."/>
            <person name="Liu M."/>
            <person name="He F."/>
        </authorList>
    </citation>
    <scope>NUCLEOTIDE SEQUENCE [LARGE SCALE MRNA] OF 150-367</scope>
    <scope>VARIANTS THR-248 AND THR-256</scope>
    <source>
        <tissue>Fetal liver</tissue>
    </source>
</reference>
<reference key="13">
    <citation type="journal article" date="1983" name="J. Biol. Chem.">
        <title>Characterization of the B-chain of human plasma alpha 2HS-glycoprotein. The complete amino acid sequence and primary structure of its heteroglycan.</title>
        <authorList>
            <person name="Gejyo F."/>
            <person name="Chang J.-L."/>
            <person name="Burgi W."/>
            <person name="Schmid K."/>
            <person name="Offner G.D."/>
            <person name="Troxler R.F."/>
            <person name="van Halbeek H."/>
            <person name="Dorland L."/>
            <person name="Gerwig G.J."/>
            <person name="Vliegenthart J.F.G."/>
        </authorList>
    </citation>
    <scope>PROTEIN SEQUENCE OF 341-367</scope>
</reference>
<reference key="14">
    <citation type="journal article" date="1989" name="Biochim. Biophys. Acta">
        <title>The position of the disulfide bonds in human plasma alpha 2 HS-glycoprotein and the repeating double disulfide bonds in the domain structure.</title>
        <authorList>
            <person name="Araki T."/>
            <person name="Yoshioka Y."/>
            <person name="Schmid K."/>
        </authorList>
    </citation>
    <scope>DISULFIDE BONDS</scope>
</reference>
<reference key="15">
    <citation type="journal article" date="1989" name="J. Biol. Chem.">
        <title>The arrangement of disulfide loops in human alpha 2-HS glycoprotein. Similarity to the disulfide bridge structures of cystatins and kininogens.</title>
        <authorList>
            <person name="Kellerman J."/>
            <person name="Haupt H."/>
            <person name="Auerswald E.-A."/>
            <person name="Mueller-Esterl W."/>
        </authorList>
    </citation>
    <scope>DISULFIDE BONDS</scope>
</reference>
<reference key="16">
    <citation type="journal article" date="2001" name="Biochem. J.">
        <title>Phosphorylation of human plasma alpha2-Heremans-Schmid glycoprotein (human fetuin) in vivo.</title>
        <authorList>
            <person name="Haglund A.C."/>
            <person name="Ek B."/>
            <person name="Ek P."/>
        </authorList>
    </citation>
    <scope>PARTIAL PROTEIN SEQUENCE</scope>
    <scope>PHOSPHORYLATION AT SER-138 AND SER-330</scope>
    <source>
        <tissue>Plasma</tissue>
    </source>
</reference>
<reference key="17">
    <citation type="journal article" date="2003" name="Nat. Biotechnol.">
        <title>Identification and quantification of N-linked glycoproteins using hydrazide chemistry, stable isotope labeling and mass spectrometry.</title>
        <authorList>
            <person name="Zhang H."/>
            <person name="Li X.-J."/>
            <person name="Martin D.B."/>
            <person name="Aebersold R."/>
        </authorList>
    </citation>
    <scope>GLYCOSYLATION AT ASN-176</scope>
</reference>
<reference key="18">
    <citation type="journal article" date="2004" name="Proteomics">
        <title>Screening for N-glycosylated proteins by liquid chromatography mass spectrometry.</title>
        <authorList>
            <person name="Bunkenborg J."/>
            <person name="Pilch B.J."/>
            <person name="Podtelejnikov A.V."/>
            <person name="Wisniewski J.R."/>
        </authorList>
    </citation>
    <scope>GLYCOSYLATION [LARGE SCALE ANALYSIS] AT ASN-156</scope>
    <source>
        <tissue>Plasma</tissue>
    </source>
</reference>
<reference key="19">
    <citation type="journal article" date="2005" name="J. Proteome Res.">
        <title>Human plasma N-glycoproteome analysis by immunoaffinity subtraction, hydrazide chemistry, and mass spectrometry.</title>
        <authorList>
            <person name="Liu T."/>
            <person name="Qian W.-J."/>
            <person name="Gritsenko M.A."/>
            <person name="Camp D.G. II"/>
            <person name="Monroe M.E."/>
            <person name="Moore R.J."/>
            <person name="Smith R.D."/>
        </authorList>
    </citation>
    <scope>GLYCOSYLATION [LARGE SCALE ANALYSIS] AT ASN-156 AND ASN-176</scope>
    <source>
        <tissue>Plasma</tissue>
    </source>
</reference>
<reference key="20">
    <citation type="journal article" date="2006" name="J. Proteome Res.">
        <title>Identification of N-linked glycoproteins in human saliva by glycoprotein capture and mass spectrometry.</title>
        <authorList>
            <person name="Ramachandran P."/>
            <person name="Boontheung P."/>
            <person name="Xie Y."/>
            <person name="Sondej M."/>
            <person name="Wong D.T."/>
            <person name="Loo J.A."/>
        </authorList>
    </citation>
    <scope>GLYCOSYLATION [LARGE SCALE ANALYSIS] AT ASN-156 AND ASN-176</scope>
    <source>
        <tissue>Saliva</tissue>
    </source>
</reference>
<reference key="21">
    <citation type="journal article" date="2008" name="J. Proteome Res.">
        <title>Phosphoproteome of resting human platelets.</title>
        <authorList>
            <person name="Zahedi R.P."/>
            <person name="Lewandrowski U."/>
            <person name="Wiesner J."/>
            <person name="Wortelkamp S."/>
            <person name="Moebius J."/>
            <person name="Schuetz C."/>
            <person name="Walter U."/>
            <person name="Gambaryan S."/>
            <person name="Sickmann A."/>
        </authorList>
    </citation>
    <scope>PHOSPHORYLATION [LARGE SCALE ANALYSIS] AT SER-138</scope>
    <scope>IDENTIFICATION BY MASS SPECTROMETRY [LARGE SCALE ANALYSIS]</scope>
    <source>
        <tissue>Platelet</tissue>
    </source>
</reference>
<reference key="22">
    <citation type="journal article" date="2008" name="Proc. Natl. Acad. Sci. U.S.A.">
        <title>A quantitative atlas of mitotic phosphorylation.</title>
        <authorList>
            <person name="Dephoure N."/>
            <person name="Zhou C."/>
            <person name="Villen J."/>
            <person name="Beausoleil S.A."/>
            <person name="Bakalarski C.E."/>
            <person name="Elledge S.J."/>
            <person name="Gygi S.P."/>
        </authorList>
    </citation>
    <scope>PHOSPHORYLATION [LARGE SCALE ANALYSIS] AT SER-138</scope>
    <scope>IDENTIFICATION BY MASS SPECTROMETRY [LARGE SCALE ANALYSIS]</scope>
    <source>
        <tissue>Cervix carcinoma</tissue>
    </source>
</reference>
<reference key="23">
    <citation type="journal article" date="2008" name="Proteomics">
        <title>Large-scale phosphoproteome analysis of human liver tissue by enrichment and fractionation of phosphopeptides with strong anion exchange chromatography.</title>
        <authorList>
            <person name="Han G."/>
            <person name="Ye M."/>
            <person name="Zhou H."/>
            <person name="Jiang X."/>
            <person name="Feng S."/>
            <person name="Jiang X."/>
            <person name="Tian R."/>
            <person name="Wan D."/>
            <person name="Zou H."/>
            <person name="Gu J."/>
        </authorList>
    </citation>
    <scope>PHOSPHORYLATION [LARGE SCALE ANALYSIS] AT SER-138</scope>
    <scope>IDENTIFICATION BY MASS SPECTROMETRY [LARGE SCALE ANALYSIS]</scope>
    <source>
        <tissue>Liver</tissue>
    </source>
</reference>
<reference key="24">
    <citation type="journal article" date="2009" name="J. Proteome Res.">
        <title>Glycoproteomics analysis of human liver tissue by combination of multiple enzyme digestion and hydrazide chemistry.</title>
        <authorList>
            <person name="Chen R."/>
            <person name="Jiang X."/>
            <person name="Sun D."/>
            <person name="Han G."/>
            <person name="Wang F."/>
            <person name="Ye M."/>
            <person name="Wang L."/>
            <person name="Zou H."/>
        </authorList>
    </citation>
    <scope>GLYCOSYLATION [LARGE SCALE ANALYSIS] AT ASN-156</scope>
    <source>
        <tissue>Liver</tissue>
    </source>
</reference>
<reference key="25">
    <citation type="journal article" date="2009" name="Mol. Cell. Proteomics">
        <title>A strategy for precise and large scale identification of core fucosylated glycoproteins.</title>
        <authorList>
            <person name="Jia W."/>
            <person name="Lu Z."/>
            <person name="Fu Y."/>
            <person name="Wang H.P."/>
            <person name="Wang L.H."/>
            <person name="Chi H."/>
            <person name="Yuan Z.F."/>
            <person name="Zheng Z.B."/>
            <person name="Song L.N."/>
            <person name="Han H.H."/>
            <person name="Liang Y.M."/>
            <person name="Wang J.L."/>
            <person name="Cai Y."/>
            <person name="Zhang Y.K."/>
            <person name="Deng Y.L."/>
            <person name="Ying W.T."/>
            <person name="He S.M."/>
            <person name="Qian X.H."/>
        </authorList>
    </citation>
    <scope>GLYCOSYLATION AT ASN-156</scope>
</reference>
<reference key="26">
    <citation type="journal article" date="2009" name="Nat. Methods">
        <title>Enrichment of glycopeptides for glycan structure and attachment site identification.</title>
        <authorList>
            <person name="Nilsson J."/>
            <person name="Rueetschi U."/>
            <person name="Halim A."/>
            <person name="Hesse C."/>
            <person name="Carlsohn E."/>
            <person name="Brinkmalm G."/>
            <person name="Larson G."/>
        </authorList>
    </citation>
    <scope>GLYCOSYLATION [LARGE SCALE ANALYSIS] AT ASN-156 AND ASN-176</scope>
    <scope>STRUCTURE OF CARBOHYDRATES</scope>
    <source>
        <tissue>Cerebrospinal fluid</tissue>
    </source>
</reference>
<reference key="27">
    <citation type="journal article" date="2011" name="BMC Syst. Biol.">
        <title>Initial characterization of the human central proteome.</title>
        <authorList>
            <person name="Burkard T.R."/>
            <person name="Planyavsky M."/>
            <person name="Kaupe I."/>
            <person name="Breitwieser F.P."/>
            <person name="Buerckstuemmer T."/>
            <person name="Bennett K.L."/>
            <person name="Superti-Furga G."/>
            <person name="Colinge J."/>
        </authorList>
    </citation>
    <scope>IDENTIFICATION BY MASS SPECTROMETRY [LARGE SCALE ANALYSIS]</scope>
</reference>
<reference key="28">
    <citation type="journal article" date="2012" name="Mol. Cell. Proteomics">
        <title>Human urinary glycoproteomics; attachment site specific analysis of N- and O-linked glycosylations by CID and ECD.</title>
        <authorList>
            <person name="Halim A."/>
            <person name="Nilsson J."/>
            <person name="Ruetschi U."/>
            <person name="Hesse C."/>
            <person name="Larson G."/>
        </authorList>
    </citation>
    <scope>GLYCOSYLATION AT ASN-156; ASN-176 AND SER-346</scope>
    <scope>STRUCTURE OF CARBOHYDRATES</scope>
    <scope>IDENTIFICATION BY MASS SPECTROMETRY</scope>
</reference>
<reference key="29">
    <citation type="journal article" date="2013" name="J. Proteome Res.">
        <title>Toward a comprehensive characterization of a human cancer cell phosphoproteome.</title>
        <authorList>
            <person name="Zhou H."/>
            <person name="Di Palma S."/>
            <person name="Preisinger C."/>
            <person name="Peng M."/>
            <person name="Polat A.N."/>
            <person name="Heck A.J."/>
            <person name="Mohammed S."/>
        </authorList>
    </citation>
    <scope>PHOSPHORYLATION [LARGE SCALE ANALYSIS] AT SER-138</scope>
    <scope>IDENTIFICATION BY MASS SPECTROMETRY [LARGE SCALE ANALYSIS]</scope>
    <source>
        <tissue>Erythroleukemia</tissue>
    </source>
</reference>
<reference key="30">
    <citation type="journal article" date="2014" name="J. Proteomics">
        <title>An enzyme assisted RP-RPLC approach for in-depth analysis of human liver phosphoproteome.</title>
        <authorList>
            <person name="Bian Y."/>
            <person name="Song C."/>
            <person name="Cheng K."/>
            <person name="Dong M."/>
            <person name="Wang F."/>
            <person name="Huang J."/>
            <person name="Sun D."/>
            <person name="Wang L."/>
            <person name="Ye M."/>
            <person name="Zou H."/>
        </authorList>
    </citation>
    <scope>PHOSPHORYLATION [LARGE SCALE ANALYSIS] AT SER-134; SER-138; THR-319 AND SER-330</scope>
    <scope>IDENTIFICATION BY MASS SPECTROMETRY [LARGE SCALE ANALYSIS]</scope>
    <source>
        <tissue>Liver</tissue>
    </source>
</reference>
<reference key="31">
    <citation type="journal article" date="2015" name="Cell">
        <title>A single kinase generates the majority of the secreted phosphoproteome.</title>
        <authorList>
            <person name="Tagliabracci V.S."/>
            <person name="Wiley S.E."/>
            <person name="Guo X."/>
            <person name="Kinch L.N."/>
            <person name="Durrant E."/>
            <person name="Wen J."/>
            <person name="Xiao J."/>
            <person name="Cui J."/>
            <person name="Nguyen K.B."/>
            <person name="Engel J.L."/>
            <person name="Coon J.J."/>
            <person name="Grishin N."/>
            <person name="Pinna L.A."/>
            <person name="Pagliarini D.J."/>
            <person name="Dixon J.E."/>
        </authorList>
    </citation>
    <scope>PHOSPHORYLATION AT SER-135; SER-138; THR-319; SER-325 AND SER-328 AND SER-330</scope>
</reference>
<reference key="32">
    <citation type="journal article" date="2017" name="Hum. Genet.">
        <title>Association of AHSG with alopecia and mental retardation (APMR) syndrome.</title>
        <authorList>
            <person name="Reza Sailani M."/>
            <person name="Jahanbani F."/>
            <person name="Nasiri J."/>
            <person name="Behnam M."/>
            <person name="Salehi M."/>
            <person name="Sedghi M."/>
            <person name="Hoseinzadeh M."/>
            <person name="Takahashi S."/>
            <person name="Zia A."/>
            <person name="Gruber J."/>
            <person name="Lynch J.L."/>
            <person name="Lam D."/>
            <person name="Winkelmann J."/>
            <person name="Amirkiai S."/>
            <person name="Pang B."/>
            <person name="Rego S."/>
            <person name="Mazroui S."/>
            <person name="Bernstein J.A."/>
            <person name="Snyder M.P."/>
        </authorList>
    </citation>
    <scope>INVOLVEMENT IN APMR1</scope>
    <scope>VARIANT APMR1 HIS-317</scope>
</reference>
<evidence type="ECO:0000250" key="1">
    <source>
        <dbReference type="UniProtKB" id="P12763"/>
    </source>
</evidence>
<evidence type="ECO:0000255" key="2"/>
<evidence type="ECO:0000255" key="3">
    <source>
        <dbReference type="PROSITE-ProRule" id="PRU00861"/>
    </source>
</evidence>
<evidence type="ECO:0000256" key="4">
    <source>
        <dbReference type="SAM" id="MobiDB-lite"/>
    </source>
</evidence>
<evidence type="ECO:0000269" key="5">
    <source>
    </source>
</evidence>
<evidence type="ECO:0000269" key="6">
    <source>
    </source>
</evidence>
<evidence type="ECO:0000269" key="7">
    <source>
    </source>
</evidence>
<evidence type="ECO:0000269" key="8">
    <source>
    </source>
</evidence>
<evidence type="ECO:0000269" key="9">
    <source>
    </source>
</evidence>
<evidence type="ECO:0000269" key="10">
    <source>
    </source>
</evidence>
<evidence type="ECO:0000269" key="11">
    <source>
    </source>
</evidence>
<evidence type="ECO:0000269" key="12">
    <source>
    </source>
</evidence>
<evidence type="ECO:0000269" key="13">
    <source>
    </source>
</evidence>
<evidence type="ECO:0000269" key="14">
    <source>
    </source>
</evidence>
<evidence type="ECO:0000269" key="15">
    <source>
    </source>
</evidence>
<evidence type="ECO:0000269" key="16">
    <source>
    </source>
</evidence>
<evidence type="ECO:0000269" key="17">
    <source>
    </source>
</evidence>
<evidence type="ECO:0000269" key="18">
    <source>
    </source>
</evidence>
<evidence type="ECO:0000269" key="19">
    <source>
    </source>
</evidence>
<evidence type="ECO:0000269" key="20">
    <source>
    </source>
</evidence>
<evidence type="ECO:0000269" key="21">
    <source>
    </source>
</evidence>
<evidence type="ECO:0000269" key="22">
    <source>
    </source>
</evidence>
<evidence type="ECO:0000305" key="23"/>
<evidence type="ECO:0007744" key="24">
    <source>
    </source>
</evidence>
<evidence type="ECO:0007744" key="25">
    <source>
    </source>
</evidence>
<evidence type="ECO:0007744" key="26">
    <source>
    </source>
</evidence>
<evidence type="ECO:0007744" key="27">
    <source>
    </source>
</evidence>
<evidence type="ECO:0007744" key="28">
    <source>
    </source>
</evidence>
<gene>
    <name type="primary">AHSG</name>
    <name type="synonym">FETUA</name>
    <name type="ORF">PRO2743</name>
</gene>